<protein>
    <recommendedName>
        <fullName evidence="1">LexA repressor</fullName>
        <ecNumber evidence="1">3.4.21.88</ecNumber>
    </recommendedName>
</protein>
<dbReference type="EC" id="3.4.21.88" evidence="1"/>
<dbReference type="EMBL" id="AE004439">
    <property type="protein sequence ID" value="AAK03265.1"/>
    <property type="molecule type" value="Genomic_DNA"/>
</dbReference>
<dbReference type="RefSeq" id="WP_010907058.1">
    <property type="nucleotide sequence ID" value="NC_002663.1"/>
</dbReference>
<dbReference type="SMR" id="P57917"/>
<dbReference type="STRING" id="272843.PM1181"/>
<dbReference type="MEROPS" id="S24.001"/>
<dbReference type="EnsemblBacteria" id="AAK03265">
    <property type="protein sequence ID" value="AAK03265"/>
    <property type="gene ID" value="PM1181"/>
</dbReference>
<dbReference type="KEGG" id="pmu:PM1181"/>
<dbReference type="PATRIC" id="fig|272843.6.peg.1192"/>
<dbReference type="HOGENOM" id="CLU_066192_45_3_6"/>
<dbReference type="OrthoDB" id="9802364at2"/>
<dbReference type="Proteomes" id="UP000000809">
    <property type="component" value="Chromosome"/>
</dbReference>
<dbReference type="GO" id="GO:0003677">
    <property type="term" value="F:DNA binding"/>
    <property type="evidence" value="ECO:0007669"/>
    <property type="project" value="UniProtKB-UniRule"/>
</dbReference>
<dbReference type="GO" id="GO:0004252">
    <property type="term" value="F:serine-type endopeptidase activity"/>
    <property type="evidence" value="ECO:0007669"/>
    <property type="project" value="UniProtKB-UniRule"/>
</dbReference>
<dbReference type="GO" id="GO:0006281">
    <property type="term" value="P:DNA repair"/>
    <property type="evidence" value="ECO:0007669"/>
    <property type="project" value="UniProtKB-UniRule"/>
</dbReference>
<dbReference type="GO" id="GO:0006260">
    <property type="term" value="P:DNA replication"/>
    <property type="evidence" value="ECO:0007669"/>
    <property type="project" value="UniProtKB-UniRule"/>
</dbReference>
<dbReference type="GO" id="GO:0045892">
    <property type="term" value="P:negative regulation of DNA-templated transcription"/>
    <property type="evidence" value="ECO:0007669"/>
    <property type="project" value="UniProtKB-UniRule"/>
</dbReference>
<dbReference type="GO" id="GO:0006508">
    <property type="term" value="P:proteolysis"/>
    <property type="evidence" value="ECO:0007669"/>
    <property type="project" value="InterPro"/>
</dbReference>
<dbReference type="GO" id="GO:0009432">
    <property type="term" value="P:SOS response"/>
    <property type="evidence" value="ECO:0007669"/>
    <property type="project" value="UniProtKB-UniRule"/>
</dbReference>
<dbReference type="CDD" id="cd06529">
    <property type="entry name" value="S24_LexA-like"/>
    <property type="match status" value="1"/>
</dbReference>
<dbReference type="FunFam" id="1.10.10.10:FF:000009">
    <property type="entry name" value="LexA repressor"/>
    <property type="match status" value="1"/>
</dbReference>
<dbReference type="FunFam" id="2.10.109.10:FF:000001">
    <property type="entry name" value="LexA repressor"/>
    <property type="match status" value="1"/>
</dbReference>
<dbReference type="Gene3D" id="2.10.109.10">
    <property type="entry name" value="Umud Fragment, subunit A"/>
    <property type="match status" value="1"/>
</dbReference>
<dbReference type="Gene3D" id="1.10.10.10">
    <property type="entry name" value="Winged helix-like DNA-binding domain superfamily/Winged helix DNA-binding domain"/>
    <property type="match status" value="1"/>
</dbReference>
<dbReference type="HAMAP" id="MF_00015">
    <property type="entry name" value="LexA"/>
    <property type="match status" value="1"/>
</dbReference>
<dbReference type="InterPro" id="IPR006200">
    <property type="entry name" value="LexA"/>
</dbReference>
<dbReference type="InterPro" id="IPR039418">
    <property type="entry name" value="LexA-like"/>
</dbReference>
<dbReference type="InterPro" id="IPR036286">
    <property type="entry name" value="LexA/Signal_pep-like_sf"/>
</dbReference>
<dbReference type="InterPro" id="IPR006199">
    <property type="entry name" value="LexA_DNA-bd_dom"/>
</dbReference>
<dbReference type="InterPro" id="IPR050077">
    <property type="entry name" value="LexA_repressor"/>
</dbReference>
<dbReference type="InterPro" id="IPR006197">
    <property type="entry name" value="Peptidase_S24_LexA"/>
</dbReference>
<dbReference type="InterPro" id="IPR015927">
    <property type="entry name" value="Peptidase_S24_S26A/B/C"/>
</dbReference>
<dbReference type="InterPro" id="IPR036388">
    <property type="entry name" value="WH-like_DNA-bd_sf"/>
</dbReference>
<dbReference type="InterPro" id="IPR036390">
    <property type="entry name" value="WH_DNA-bd_sf"/>
</dbReference>
<dbReference type="NCBIfam" id="TIGR00498">
    <property type="entry name" value="lexA"/>
    <property type="match status" value="1"/>
</dbReference>
<dbReference type="PANTHER" id="PTHR33516">
    <property type="entry name" value="LEXA REPRESSOR"/>
    <property type="match status" value="1"/>
</dbReference>
<dbReference type="PANTHER" id="PTHR33516:SF2">
    <property type="entry name" value="LEXA REPRESSOR-RELATED"/>
    <property type="match status" value="1"/>
</dbReference>
<dbReference type="Pfam" id="PF01726">
    <property type="entry name" value="LexA_DNA_bind"/>
    <property type="match status" value="1"/>
</dbReference>
<dbReference type="Pfam" id="PF00717">
    <property type="entry name" value="Peptidase_S24"/>
    <property type="match status" value="1"/>
</dbReference>
<dbReference type="PRINTS" id="PR00726">
    <property type="entry name" value="LEXASERPTASE"/>
</dbReference>
<dbReference type="SUPFAM" id="SSF51306">
    <property type="entry name" value="LexA/Signal peptidase"/>
    <property type="match status" value="1"/>
</dbReference>
<dbReference type="SUPFAM" id="SSF46785">
    <property type="entry name" value="Winged helix' DNA-binding domain"/>
    <property type="match status" value="1"/>
</dbReference>
<keyword id="KW-0068">Autocatalytic cleavage</keyword>
<keyword id="KW-0227">DNA damage</keyword>
<keyword id="KW-0234">DNA repair</keyword>
<keyword id="KW-0235">DNA replication</keyword>
<keyword id="KW-0238">DNA-binding</keyword>
<keyword id="KW-0378">Hydrolase</keyword>
<keyword id="KW-1185">Reference proteome</keyword>
<keyword id="KW-0678">Repressor</keyword>
<keyword id="KW-0742">SOS response</keyword>
<keyword id="KW-0804">Transcription</keyword>
<keyword id="KW-0805">Transcription regulation</keyword>
<comment type="function">
    <text evidence="1">Represses a number of genes involved in the response to DNA damage (SOS response), including recA and lexA. In the presence of single-stranded DNA, RecA interacts with LexA causing an autocatalytic cleavage which disrupts the DNA-binding part of LexA, leading to derepression of the SOS regulon and eventually DNA repair.</text>
</comment>
<comment type="catalytic activity">
    <reaction evidence="1">
        <text>Hydrolysis of Ala-|-Gly bond in repressor LexA.</text>
        <dbReference type="EC" id="3.4.21.88"/>
    </reaction>
</comment>
<comment type="subunit">
    <text evidence="1">Homodimer.</text>
</comment>
<comment type="similarity">
    <text evidence="1">Belongs to the peptidase S24 family.</text>
</comment>
<gene>
    <name evidence="1" type="primary">lexA</name>
    <name type="ordered locus">PM1181</name>
</gene>
<name>LEXA_PASMU</name>
<sequence>MKPFKALTARQQEVYDLLKRHLENTGMPPTRAEISKELGFRSPNAAEEHLKALARKGVIEIISGTSRGIRLLLEESESDENQGLPLVGRVAAGEPILAEQHIEGTYQVDANMFKPQANFLLKVYGQSMKNIGILDGDLLAVHSTKDVRNGQIVVARIEDEVTVKRLERKGSVIYLHAENEEFAPIVVDLNQQPNFEIEGIAVGIIRNNAWM</sequence>
<accession>P57917</accession>
<proteinExistence type="inferred from homology"/>
<feature type="chain" id="PRO_0000170063" description="LexA repressor">
    <location>
        <begin position="1"/>
        <end position="211"/>
    </location>
</feature>
<feature type="DNA-binding region" description="H-T-H motif" evidence="1">
    <location>
        <begin position="31"/>
        <end position="51"/>
    </location>
</feature>
<feature type="active site" description="For autocatalytic cleavage activity" evidence="1">
    <location>
        <position position="127"/>
    </location>
</feature>
<feature type="active site" description="For autocatalytic cleavage activity" evidence="1">
    <location>
        <position position="164"/>
    </location>
</feature>
<feature type="site" description="Cleavage; by autolysis" evidence="1">
    <location>
        <begin position="92"/>
        <end position="93"/>
    </location>
</feature>
<organism>
    <name type="scientific">Pasteurella multocida (strain Pm70)</name>
    <dbReference type="NCBI Taxonomy" id="272843"/>
    <lineage>
        <taxon>Bacteria</taxon>
        <taxon>Pseudomonadati</taxon>
        <taxon>Pseudomonadota</taxon>
        <taxon>Gammaproteobacteria</taxon>
        <taxon>Pasteurellales</taxon>
        <taxon>Pasteurellaceae</taxon>
        <taxon>Pasteurella</taxon>
    </lineage>
</organism>
<reference key="1">
    <citation type="journal article" date="2001" name="Proc. Natl. Acad. Sci. U.S.A.">
        <title>Complete genomic sequence of Pasteurella multocida Pm70.</title>
        <authorList>
            <person name="May B.J."/>
            <person name="Zhang Q."/>
            <person name="Li L.L."/>
            <person name="Paustian M.L."/>
            <person name="Whittam T.S."/>
            <person name="Kapur V."/>
        </authorList>
    </citation>
    <scope>NUCLEOTIDE SEQUENCE [LARGE SCALE GENOMIC DNA]</scope>
    <source>
        <strain>Pm70</strain>
    </source>
</reference>
<evidence type="ECO:0000255" key="1">
    <source>
        <dbReference type="HAMAP-Rule" id="MF_00015"/>
    </source>
</evidence>